<comment type="function">
    <text evidence="1">Probably involved in the control of the structural glucose backbone of osmoregulated periplasmic glucans (OPGs).</text>
</comment>
<comment type="pathway">
    <text>Glycan metabolism; osmoregulated periplasmic glucan (OPG) biosynthesis.</text>
</comment>
<comment type="subcellular location">
    <subcellularLocation>
        <location evidence="1">Periplasm</location>
    </subcellularLocation>
</comment>
<comment type="PTM">
    <text>Predicted to be exported by the Tat system. The position of the signal peptide cleavage has not been experimentally proven.</text>
</comment>
<comment type="similarity">
    <text evidence="3">Belongs to the OpgD/OpgG family.</text>
</comment>
<proteinExistence type="inferred from homology"/>
<feature type="signal peptide" description="Tat-type signal" evidence="2">
    <location>
        <begin position="1"/>
        <end position="32"/>
    </location>
</feature>
<feature type="chain" id="PRO_0000020215" description="Glucans biosynthesis protein D">
    <location>
        <begin position="33"/>
        <end position="551"/>
    </location>
</feature>
<name>OPGD_SHIFL</name>
<protein>
    <recommendedName>
        <fullName>Glucans biosynthesis protein D</fullName>
    </recommendedName>
</protein>
<gene>
    <name type="primary">mdoD</name>
    <name type="synonym">opgD</name>
    <name type="ordered locus">SF1786</name>
    <name type="ordered locus">S1488</name>
</gene>
<accession>Q83R85</accession>
<organism>
    <name type="scientific">Shigella flexneri</name>
    <dbReference type="NCBI Taxonomy" id="623"/>
    <lineage>
        <taxon>Bacteria</taxon>
        <taxon>Pseudomonadati</taxon>
        <taxon>Pseudomonadota</taxon>
        <taxon>Gammaproteobacteria</taxon>
        <taxon>Enterobacterales</taxon>
        <taxon>Enterobacteriaceae</taxon>
        <taxon>Shigella</taxon>
    </lineage>
</organism>
<dbReference type="EMBL" id="AE005674">
    <property type="protein sequence ID" value="AAN43355.1"/>
    <property type="molecule type" value="Genomic_DNA"/>
</dbReference>
<dbReference type="EMBL" id="AE014073">
    <property type="protein sequence ID" value="AAP16873.1"/>
    <property type="molecule type" value="Genomic_DNA"/>
</dbReference>
<dbReference type="RefSeq" id="NP_707648.1">
    <property type="nucleotide sequence ID" value="NC_004337.2"/>
</dbReference>
<dbReference type="RefSeq" id="WP_000375966.1">
    <property type="nucleotide sequence ID" value="NZ_WPGW01000106.1"/>
</dbReference>
<dbReference type="SMR" id="Q83R85"/>
<dbReference type="STRING" id="198214.SF1786"/>
<dbReference type="PaxDb" id="198214-SF1786"/>
<dbReference type="GeneID" id="1024950"/>
<dbReference type="KEGG" id="sfl:SF1786"/>
<dbReference type="KEGG" id="sfx:S1488"/>
<dbReference type="PATRIC" id="fig|198214.7.peg.2119"/>
<dbReference type="HOGENOM" id="CLU_023403_2_0_6"/>
<dbReference type="UniPathway" id="UPA00637"/>
<dbReference type="Proteomes" id="UP000001006">
    <property type="component" value="Chromosome"/>
</dbReference>
<dbReference type="Proteomes" id="UP000002673">
    <property type="component" value="Chromosome"/>
</dbReference>
<dbReference type="GO" id="GO:0030288">
    <property type="term" value="C:outer membrane-bounded periplasmic space"/>
    <property type="evidence" value="ECO:0007669"/>
    <property type="project" value="TreeGrafter"/>
</dbReference>
<dbReference type="GO" id="GO:0030246">
    <property type="term" value="F:carbohydrate binding"/>
    <property type="evidence" value="ECO:0007669"/>
    <property type="project" value="InterPro"/>
</dbReference>
<dbReference type="GO" id="GO:0003824">
    <property type="term" value="F:catalytic activity"/>
    <property type="evidence" value="ECO:0007669"/>
    <property type="project" value="InterPro"/>
</dbReference>
<dbReference type="GO" id="GO:0051274">
    <property type="term" value="P:beta-glucan biosynthetic process"/>
    <property type="evidence" value="ECO:0007669"/>
    <property type="project" value="TreeGrafter"/>
</dbReference>
<dbReference type="FunFam" id="2.60.40.10:FF:000379">
    <property type="entry name" value="Glucans biosynthesis protein D"/>
    <property type="match status" value="1"/>
</dbReference>
<dbReference type="FunFam" id="2.70.98.10:FF:000004">
    <property type="entry name" value="Glucans biosynthesis protein D"/>
    <property type="match status" value="1"/>
</dbReference>
<dbReference type="Gene3D" id="2.70.98.10">
    <property type="match status" value="1"/>
</dbReference>
<dbReference type="Gene3D" id="2.60.40.10">
    <property type="entry name" value="Immunoglobulins"/>
    <property type="match status" value="1"/>
</dbReference>
<dbReference type="HAMAP" id="MF_01068">
    <property type="entry name" value="MdoD_OpgD"/>
    <property type="match status" value="1"/>
</dbReference>
<dbReference type="InterPro" id="IPR011013">
    <property type="entry name" value="Gal_mutarotase_sf_dom"/>
</dbReference>
<dbReference type="InterPro" id="IPR014718">
    <property type="entry name" value="GH-type_carb-bd"/>
</dbReference>
<dbReference type="InterPro" id="IPR023724">
    <property type="entry name" value="Glucan_biosyn_MdoD"/>
</dbReference>
<dbReference type="InterPro" id="IPR014438">
    <property type="entry name" value="Glucan_biosyn_MdoG/MdoD"/>
</dbReference>
<dbReference type="InterPro" id="IPR007444">
    <property type="entry name" value="Glucan_biosyn_MdoG_C"/>
</dbReference>
<dbReference type="InterPro" id="IPR013783">
    <property type="entry name" value="Ig-like_fold"/>
</dbReference>
<dbReference type="InterPro" id="IPR014756">
    <property type="entry name" value="Ig_E-set"/>
</dbReference>
<dbReference type="InterPro" id="IPR006311">
    <property type="entry name" value="TAT_signal"/>
</dbReference>
<dbReference type="InterPro" id="IPR019546">
    <property type="entry name" value="TAT_signal_bac_arc"/>
</dbReference>
<dbReference type="NCBIfam" id="TIGR01409">
    <property type="entry name" value="TAT_signal_seq"/>
    <property type="match status" value="1"/>
</dbReference>
<dbReference type="PANTHER" id="PTHR30504">
    <property type="entry name" value="GLUCANS BIOSYNTHESIS PROTEIN"/>
    <property type="match status" value="1"/>
</dbReference>
<dbReference type="PANTHER" id="PTHR30504:SF3">
    <property type="entry name" value="GLUCANS BIOSYNTHESIS PROTEIN D"/>
    <property type="match status" value="1"/>
</dbReference>
<dbReference type="Pfam" id="PF04349">
    <property type="entry name" value="MdoG"/>
    <property type="match status" value="1"/>
</dbReference>
<dbReference type="PIRSF" id="PIRSF006281">
    <property type="entry name" value="MdoG"/>
    <property type="match status" value="1"/>
</dbReference>
<dbReference type="SUPFAM" id="SSF81296">
    <property type="entry name" value="E set domains"/>
    <property type="match status" value="1"/>
</dbReference>
<dbReference type="SUPFAM" id="SSF74650">
    <property type="entry name" value="Galactose mutarotase-like"/>
    <property type="match status" value="1"/>
</dbReference>
<dbReference type="PROSITE" id="PS51318">
    <property type="entry name" value="TAT"/>
    <property type="match status" value="1"/>
</dbReference>
<evidence type="ECO:0000250" key="1"/>
<evidence type="ECO:0000255" key="2"/>
<evidence type="ECO:0000305" key="3"/>
<sequence length="551" mass="62784">MDRRRFIKGSMAMAAVCGTSGIASLFSQAAFAADSDIADGQTQRFDFSILQSMAHDLAQTAWRGAPRPLPDTLATMTPQAYNSIQYDAEKSLWHNVENRQLDAQFFHMGMGFRRRVRMFSVDPATHLAREIHFRPELFKYNDAGVDTKQLEGQSDLGFAGFRVFKAPELARRDVVSFLGASYFRAVDDTYQYGLSARGLAIDTYTDSKEEFPDFTAFWFDTVKPGATTFTVYALLDSASITGAYKFTIHCEKSQVIMDVENHLYARKDIKQLGISPMTSMFSCGTNERRMCDTIHPQIHDSDRLSMWRGNGEWICRPLNNPQKLQFNAYTDNNPKGFGLLQLDRDFSHYQDIMGWYNKRPSLWVEPRNKWGKGTIGLMEIPTTGETLDNIVCFWQPEKAVKAGDEFAFQYRLYWSAQPPVHCPLARVMATRTGMGGFPEGWAPGEHYPEKWARRFAVDFVGGDLKAAAPKGIEPVITLSSGEAKQIEILYIEPIDGYRIQFDWYPTSDSTDPVDMRMYLRCQGDAISETWLYQYFPPAPDKRQYVDDRVMS</sequence>
<keyword id="KW-0574">Periplasm</keyword>
<keyword id="KW-1185">Reference proteome</keyword>
<keyword id="KW-0732">Signal</keyword>
<reference key="1">
    <citation type="journal article" date="2002" name="Nucleic Acids Res.">
        <title>Genome sequence of Shigella flexneri 2a: insights into pathogenicity through comparison with genomes of Escherichia coli K12 and O157.</title>
        <authorList>
            <person name="Jin Q."/>
            <person name="Yuan Z."/>
            <person name="Xu J."/>
            <person name="Wang Y."/>
            <person name="Shen Y."/>
            <person name="Lu W."/>
            <person name="Wang J."/>
            <person name="Liu H."/>
            <person name="Yang J."/>
            <person name="Yang F."/>
            <person name="Zhang X."/>
            <person name="Zhang J."/>
            <person name="Yang G."/>
            <person name="Wu H."/>
            <person name="Qu D."/>
            <person name="Dong J."/>
            <person name="Sun L."/>
            <person name="Xue Y."/>
            <person name="Zhao A."/>
            <person name="Gao Y."/>
            <person name="Zhu J."/>
            <person name="Kan B."/>
            <person name="Ding K."/>
            <person name="Chen S."/>
            <person name="Cheng H."/>
            <person name="Yao Z."/>
            <person name="He B."/>
            <person name="Chen R."/>
            <person name="Ma D."/>
            <person name="Qiang B."/>
            <person name="Wen Y."/>
            <person name="Hou Y."/>
            <person name="Yu J."/>
        </authorList>
    </citation>
    <scope>NUCLEOTIDE SEQUENCE [LARGE SCALE GENOMIC DNA]</scope>
    <source>
        <strain>301 / Serotype 2a</strain>
    </source>
</reference>
<reference key="2">
    <citation type="journal article" date="2003" name="Infect. Immun.">
        <title>Complete genome sequence and comparative genomics of Shigella flexneri serotype 2a strain 2457T.</title>
        <authorList>
            <person name="Wei J."/>
            <person name="Goldberg M.B."/>
            <person name="Burland V."/>
            <person name="Venkatesan M.M."/>
            <person name="Deng W."/>
            <person name="Fournier G."/>
            <person name="Mayhew G.F."/>
            <person name="Plunkett G. III"/>
            <person name="Rose D.J."/>
            <person name="Darling A."/>
            <person name="Mau B."/>
            <person name="Perna N.T."/>
            <person name="Payne S.M."/>
            <person name="Runyen-Janecky L.J."/>
            <person name="Zhou S."/>
            <person name="Schwartz D.C."/>
            <person name="Blattner F.R."/>
        </authorList>
    </citation>
    <scope>NUCLEOTIDE SEQUENCE [LARGE SCALE GENOMIC DNA]</scope>
    <source>
        <strain>ATCC 700930 / 2457T / Serotype 2a</strain>
    </source>
</reference>